<feature type="initiator methionine" description="Removed" evidence="1">
    <location>
        <position position="1"/>
    </location>
</feature>
<feature type="chain" id="PRO_0000095787" description="Translation initiation factor IF-1">
    <location>
        <begin position="2"/>
        <end position="72"/>
    </location>
</feature>
<feature type="domain" description="S1-like" evidence="2">
    <location>
        <begin position="2"/>
        <end position="72"/>
    </location>
</feature>
<protein>
    <recommendedName>
        <fullName evidence="2">Translation initiation factor IF-1</fullName>
    </recommendedName>
</protein>
<organism>
    <name type="scientific">Escherichia coli O157:H7</name>
    <dbReference type="NCBI Taxonomy" id="83334"/>
    <lineage>
        <taxon>Bacteria</taxon>
        <taxon>Pseudomonadati</taxon>
        <taxon>Pseudomonadota</taxon>
        <taxon>Gammaproteobacteria</taxon>
        <taxon>Enterobacterales</taxon>
        <taxon>Enterobacteriaceae</taxon>
        <taxon>Escherichia</taxon>
    </lineage>
</organism>
<sequence length="72" mass="8250">MAKEDNIEMQGTVLETLPNTMFRVELENGHVVTAHISGKMRKNYIRILTGDKVTVELTPYDLSKGRIVFRSR</sequence>
<gene>
    <name evidence="2" type="primary">infA</name>
    <name type="ordered locus">Z1228</name>
    <name type="ordered locus">ECs0969</name>
</gene>
<accession>P69224</accession>
<accession>P02998</accession>
<comment type="function">
    <text evidence="2">One of the essential components for the initiation of protein synthesis. Stabilizes the binding of IF-2 and IF-3 on the 30S subunit to which N-formylmethionyl-tRNA(fMet) subsequently binds. Helps modulate mRNA selection, yielding the 30S pre-initiation complex (PIC). Upon addition of the 50S ribosomal subunit IF-1, IF-2 and IF-3 are released leaving the mature 70S translation initiation complex.</text>
</comment>
<comment type="subunit">
    <text evidence="2">Component of the 30S ribosomal translation pre-initiation complex which assembles on the 30S ribosome in the order IF-2 and IF-3, IF-1 and N-formylmethionyl-tRNA(fMet); mRNA recruitment can occur at any time during PIC assembly.</text>
</comment>
<comment type="subcellular location">
    <subcellularLocation>
        <location evidence="2">Cytoplasm</location>
    </subcellularLocation>
</comment>
<comment type="similarity">
    <text evidence="2">Belongs to the IF-1 family.</text>
</comment>
<proteinExistence type="inferred from homology"/>
<keyword id="KW-0963">Cytoplasm</keyword>
<keyword id="KW-0396">Initiation factor</keyword>
<keyword id="KW-0648">Protein biosynthesis</keyword>
<keyword id="KW-1185">Reference proteome</keyword>
<keyword id="KW-0694">RNA-binding</keyword>
<keyword id="KW-0699">rRNA-binding</keyword>
<evidence type="ECO:0000250" key="1"/>
<evidence type="ECO:0000255" key="2">
    <source>
        <dbReference type="HAMAP-Rule" id="MF_00075"/>
    </source>
</evidence>
<dbReference type="EMBL" id="AE005174">
    <property type="protein sequence ID" value="AAG55371.1"/>
    <property type="molecule type" value="Genomic_DNA"/>
</dbReference>
<dbReference type="EMBL" id="BA000007">
    <property type="protein sequence ID" value="BAB34392.1"/>
    <property type="molecule type" value="Genomic_DNA"/>
</dbReference>
<dbReference type="PIR" id="A99750">
    <property type="entry name" value="A99750"/>
</dbReference>
<dbReference type="PIR" id="G85613">
    <property type="entry name" value="G85613"/>
</dbReference>
<dbReference type="RefSeq" id="NP_308996.1">
    <property type="nucleotide sequence ID" value="NC_002695.1"/>
</dbReference>
<dbReference type="RefSeq" id="WP_001040187.1">
    <property type="nucleotide sequence ID" value="NZ_VOAI01000006.1"/>
</dbReference>
<dbReference type="SMR" id="P69224"/>
<dbReference type="STRING" id="155864.Z1228"/>
<dbReference type="GeneID" id="917713"/>
<dbReference type="GeneID" id="93776536"/>
<dbReference type="KEGG" id="ece:Z1228"/>
<dbReference type="KEGG" id="ecs:ECs_0969"/>
<dbReference type="PATRIC" id="fig|386585.9.peg.1085"/>
<dbReference type="eggNOG" id="COG0361">
    <property type="taxonomic scope" value="Bacteria"/>
</dbReference>
<dbReference type="HOGENOM" id="CLU_151267_1_0_6"/>
<dbReference type="OMA" id="EGHQCLC"/>
<dbReference type="Proteomes" id="UP000000558">
    <property type="component" value="Chromosome"/>
</dbReference>
<dbReference type="Proteomes" id="UP000002519">
    <property type="component" value="Chromosome"/>
</dbReference>
<dbReference type="GO" id="GO:0005829">
    <property type="term" value="C:cytosol"/>
    <property type="evidence" value="ECO:0007669"/>
    <property type="project" value="TreeGrafter"/>
</dbReference>
<dbReference type="GO" id="GO:0043022">
    <property type="term" value="F:ribosome binding"/>
    <property type="evidence" value="ECO:0007669"/>
    <property type="project" value="UniProtKB-UniRule"/>
</dbReference>
<dbReference type="GO" id="GO:0019843">
    <property type="term" value="F:rRNA binding"/>
    <property type="evidence" value="ECO:0007669"/>
    <property type="project" value="UniProtKB-UniRule"/>
</dbReference>
<dbReference type="GO" id="GO:0003743">
    <property type="term" value="F:translation initiation factor activity"/>
    <property type="evidence" value="ECO:0007669"/>
    <property type="project" value="UniProtKB-UniRule"/>
</dbReference>
<dbReference type="CDD" id="cd04451">
    <property type="entry name" value="S1_IF1"/>
    <property type="match status" value="1"/>
</dbReference>
<dbReference type="FunFam" id="2.40.50.140:FF:000002">
    <property type="entry name" value="Translation initiation factor IF-1"/>
    <property type="match status" value="1"/>
</dbReference>
<dbReference type="Gene3D" id="2.40.50.140">
    <property type="entry name" value="Nucleic acid-binding proteins"/>
    <property type="match status" value="1"/>
</dbReference>
<dbReference type="HAMAP" id="MF_00075">
    <property type="entry name" value="IF_1"/>
    <property type="match status" value="1"/>
</dbReference>
<dbReference type="InterPro" id="IPR012340">
    <property type="entry name" value="NA-bd_OB-fold"/>
</dbReference>
<dbReference type="InterPro" id="IPR006196">
    <property type="entry name" value="RNA-binding_domain_S1_IF1"/>
</dbReference>
<dbReference type="InterPro" id="IPR003029">
    <property type="entry name" value="S1_domain"/>
</dbReference>
<dbReference type="InterPro" id="IPR004368">
    <property type="entry name" value="TIF_IF1"/>
</dbReference>
<dbReference type="NCBIfam" id="TIGR00008">
    <property type="entry name" value="infA"/>
    <property type="match status" value="1"/>
</dbReference>
<dbReference type="PANTHER" id="PTHR33370">
    <property type="entry name" value="TRANSLATION INITIATION FACTOR IF-1, CHLOROPLASTIC"/>
    <property type="match status" value="1"/>
</dbReference>
<dbReference type="PANTHER" id="PTHR33370:SF1">
    <property type="entry name" value="TRANSLATION INITIATION FACTOR IF-1, CHLOROPLASTIC"/>
    <property type="match status" value="1"/>
</dbReference>
<dbReference type="Pfam" id="PF01176">
    <property type="entry name" value="eIF-1a"/>
    <property type="match status" value="1"/>
</dbReference>
<dbReference type="SMART" id="SM00316">
    <property type="entry name" value="S1"/>
    <property type="match status" value="1"/>
</dbReference>
<dbReference type="SUPFAM" id="SSF50249">
    <property type="entry name" value="Nucleic acid-binding proteins"/>
    <property type="match status" value="1"/>
</dbReference>
<dbReference type="PROSITE" id="PS50832">
    <property type="entry name" value="S1_IF1_TYPE"/>
    <property type="match status" value="1"/>
</dbReference>
<name>IF1_ECO57</name>
<reference key="1">
    <citation type="journal article" date="2001" name="Nature">
        <title>Genome sequence of enterohaemorrhagic Escherichia coli O157:H7.</title>
        <authorList>
            <person name="Perna N.T."/>
            <person name="Plunkett G. III"/>
            <person name="Burland V."/>
            <person name="Mau B."/>
            <person name="Glasner J.D."/>
            <person name="Rose D.J."/>
            <person name="Mayhew G.F."/>
            <person name="Evans P.S."/>
            <person name="Gregor J."/>
            <person name="Kirkpatrick H.A."/>
            <person name="Posfai G."/>
            <person name="Hackett J."/>
            <person name="Klink S."/>
            <person name="Boutin A."/>
            <person name="Shao Y."/>
            <person name="Miller L."/>
            <person name="Grotbeck E.J."/>
            <person name="Davis N.W."/>
            <person name="Lim A."/>
            <person name="Dimalanta E.T."/>
            <person name="Potamousis K."/>
            <person name="Apodaca J."/>
            <person name="Anantharaman T.S."/>
            <person name="Lin J."/>
            <person name="Yen G."/>
            <person name="Schwartz D.C."/>
            <person name="Welch R.A."/>
            <person name="Blattner F.R."/>
        </authorList>
    </citation>
    <scope>NUCLEOTIDE SEQUENCE [LARGE SCALE GENOMIC DNA]</scope>
    <source>
        <strain>O157:H7 / EDL933 / ATCC 700927 / EHEC</strain>
    </source>
</reference>
<reference key="2">
    <citation type="journal article" date="2001" name="DNA Res.">
        <title>Complete genome sequence of enterohemorrhagic Escherichia coli O157:H7 and genomic comparison with a laboratory strain K-12.</title>
        <authorList>
            <person name="Hayashi T."/>
            <person name="Makino K."/>
            <person name="Ohnishi M."/>
            <person name="Kurokawa K."/>
            <person name="Ishii K."/>
            <person name="Yokoyama K."/>
            <person name="Han C.-G."/>
            <person name="Ohtsubo E."/>
            <person name="Nakayama K."/>
            <person name="Murata T."/>
            <person name="Tanaka M."/>
            <person name="Tobe T."/>
            <person name="Iida T."/>
            <person name="Takami H."/>
            <person name="Honda T."/>
            <person name="Sasakawa C."/>
            <person name="Ogasawara N."/>
            <person name="Yasunaga T."/>
            <person name="Kuhara S."/>
            <person name="Shiba T."/>
            <person name="Hattori M."/>
            <person name="Shinagawa H."/>
        </authorList>
    </citation>
    <scope>NUCLEOTIDE SEQUENCE [LARGE SCALE GENOMIC DNA]</scope>
    <source>
        <strain>O157:H7 / Sakai / RIMD 0509952 / EHEC</strain>
    </source>
</reference>